<sequence>MMVKVTKLVASRPIVVFCVLAFLVVVFECIWISNWRTTTENLVKEVASFTEDLRTSLVSEIENIGKFTYAKTNLSTIGLARVIDSYITNNDTGFTEIQTQIAPLLFVAYSTILQVSQVSYISRDGLMFSYIAESNTSVAVFANSSSNSSRGDYTWYTQTVDQLTGRLNGNSTKSQSLDVTHTDWFQAAQSNNYTTAFVGTSLGGEDNETLIQSVVSLYSKKGLVSLGFPVKTLTEVLNSLNLHGEELYMWTKDGTVLVREGSLNDSFFISNGSICFGRESNSLWSQCIPENCSSSGYEVEIKRLRYQAFCSVIEVSGVPLRYTLMFPNKGGATRIKHQAEKAKYQLIVVMIFLGFGWPVWFVWFMMQATRREMHMRATLINQMEATQQAERKSMNKSQAFANASHDIRGALAGMKGLIDICRDGVKPGSDVDTTLNQVNVCAKDLVALLNSVLDMSKIESGKMQLVEEDFNLSKLLEDVIDFYHPVAMKKGVDVVLDPHDGSVFKFSNVRGDSGRLKQILNNLVSNAVKFTVDGHIAVRAWAQRPGSNSSVVLASYPKGVSKFVKSMFCKNKEESSTYETEISNSIRNNANTMEFVFEVDDTGKGIPMEMRKSVFENYVQVRETAQGHQGTGLGLGIVQSLVRLMGGEIRITDKAMGEKGTCFQFNVLLTTLESPPVSDMKVRQEIEAGGDYVSTPNLGLTINTSLGGSMNIRNLSPRFNNCLSSSPKQEGSRVVLLLKNEERRRVTEKYIKNLGIKVTVVEKWEHLSYALERLFGFSPQSSMGRAECSLSCPSSRELPFIGMDGIDSRSQLPKRRSISFSAVVLLVIDAKTGPFFELCDIVKQFRRGLPHGISCKVVWLNESSTRVSERGDISCSRPLHGSRLMEVLKMLPEFGGTVLKEPPTELQRESLLRHSFVAERSPKHKVQEEGPSSMFNKKLGKRIMASTDSESETRVKSVRTGRKPIGNPEDEQETSKPSDDEFLRGKRVLVVDDNFISRKVATGKLKKMGVSEVEQCDSGKEALRLVTEGLTQREEQGSVDKLPFDYIFMDCQMPEMDGYEATREIRKVEKSYGVRTPIIAVSGHDPGSEEARETIQAGMDAFLDKSLNQLANVIREIESKRH</sequence>
<evidence type="ECO:0000255" key="1"/>
<evidence type="ECO:0000255" key="2">
    <source>
        <dbReference type="PROSITE-ProRule" id="PRU00107"/>
    </source>
</evidence>
<evidence type="ECO:0000255" key="3">
    <source>
        <dbReference type="PROSITE-ProRule" id="PRU00169"/>
    </source>
</evidence>
<evidence type="ECO:0000256" key="4">
    <source>
        <dbReference type="SAM" id="MobiDB-lite"/>
    </source>
</evidence>
<evidence type="ECO:0000269" key="5">
    <source>
    </source>
</evidence>
<evidence type="ECO:0000269" key="6">
    <source>
    </source>
</evidence>
<evidence type="ECO:0000269" key="7">
    <source>
    </source>
</evidence>
<evidence type="ECO:0000269" key="8">
    <source>
    </source>
</evidence>
<evidence type="ECO:0000269" key="9">
    <source>
    </source>
</evidence>
<evidence type="ECO:0000269" key="10">
    <source>
    </source>
</evidence>
<evidence type="ECO:0000269" key="11">
    <source>
    </source>
</evidence>
<evidence type="ECO:0000269" key="12">
    <source>
    </source>
</evidence>
<evidence type="ECO:0007829" key="13">
    <source>
        <dbReference type="PDB" id="5LNN"/>
    </source>
</evidence>
<reference key="1">
    <citation type="journal article" date="1996" name="Science">
        <title>CKI1, a histidine kinase homolog implicated in cytokinin signal transduction.</title>
        <authorList>
            <person name="Kakimoto T."/>
        </authorList>
    </citation>
    <scope>NUCLEOTIDE SEQUENCE [MRNA]</scope>
    <scope>FUNCTION</scope>
    <source>
        <strain>cv. Wassilewskija</strain>
        <tissue>Shoot</tissue>
    </source>
</reference>
<reference key="2">
    <citation type="journal article" date="1999" name="Nature">
        <title>Sequence and analysis of chromosome 2 of the plant Arabidopsis thaliana.</title>
        <authorList>
            <person name="Lin X."/>
            <person name="Kaul S."/>
            <person name="Rounsley S.D."/>
            <person name="Shea T.P."/>
            <person name="Benito M.-I."/>
            <person name="Town C.D."/>
            <person name="Fujii C.Y."/>
            <person name="Mason T.M."/>
            <person name="Bowman C.L."/>
            <person name="Barnstead M.E."/>
            <person name="Feldblyum T.V."/>
            <person name="Buell C.R."/>
            <person name="Ketchum K.A."/>
            <person name="Lee J.J."/>
            <person name="Ronning C.M."/>
            <person name="Koo H.L."/>
            <person name="Moffat K.S."/>
            <person name="Cronin L.A."/>
            <person name="Shen M."/>
            <person name="Pai G."/>
            <person name="Van Aken S."/>
            <person name="Umayam L."/>
            <person name="Tallon L.J."/>
            <person name="Gill J.E."/>
            <person name="Adams M.D."/>
            <person name="Carrera A.J."/>
            <person name="Creasy T.H."/>
            <person name="Goodman H.M."/>
            <person name="Somerville C.R."/>
            <person name="Copenhaver G.P."/>
            <person name="Preuss D."/>
            <person name="Nierman W.C."/>
            <person name="White O."/>
            <person name="Eisen J.A."/>
            <person name="Salzberg S.L."/>
            <person name="Fraser C.M."/>
            <person name="Venter J.C."/>
        </authorList>
    </citation>
    <scope>NUCLEOTIDE SEQUENCE [LARGE SCALE GENOMIC DNA]</scope>
    <source>
        <strain>cv. Columbia</strain>
    </source>
</reference>
<reference key="3">
    <citation type="journal article" date="2017" name="Plant J.">
        <title>Araport11: a complete reannotation of the Arabidopsis thaliana reference genome.</title>
        <authorList>
            <person name="Cheng C.Y."/>
            <person name="Krishnakumar V."/>
            <person name="Chan A.P."/>
            <person name="Thibaud-Nissen F."/>
            <person name="Schobel S."/>
            <person name="Town C.D."/>
        </authorList>
    </citation>
    <scope>GENOME REANNOTATION</scope>
    <source>
        <strain>cv. Columbia</strain>
    </source>
</reference>
<reference key="4">
    <citation type="journal article" date="2007" name="Genetics">
        <title>The genetic architecture of shoot branching in Arabidopsis thaliana: a comparative assessment of candidate gene associations vs. quantitative trait locus mapping.</title>
        <authorList>
            <person name="Ehrenreich I.M."/>
            <person name="Stafford P.A."/>
            <person name="Purugganan M.D."/>
        </authorList>
    </citation>
    <scope>NUCLEOTIDE SEQUENCE [GENOMIC DNA] OF 740-1003</scope>
    <source>
        <strain>cv. Ag-0</strain>
        <strain>cv. An-1</strain>
        <strain>cv. Br-0</strain>
        <strain>cv. C24</strain>
        <strain>cv. Ct-1</strain>
        <strain>cv. Cvi-1</strain>
        <strain>cv. Edi-0</strain>
        <strain>cv. Ga-0</strain>
        <strain>cv. Kas-2</strain>
        <strain>cv. Kin-0</strain>
        <strain>cv. Landsberg erecta</strain>
        <strain>cv. Lz-0</strain>
        <strain>cv. Ms-0</strain>
        <strain>cv. Mt-0</strain>
        <strain>cv. Nd-1</strain>
        <strain>cv. Nok-3</strain>
        <strain>cv. Oy-0</strain>
        <strain>cv. Se-0</strain>
        <strain>cv. Sorbo</strain>
        <strain>cv. Tsu-1</strain>
        <strain>cv. Van-0</strain>
        <strain>cv. Wa-1</strain>
        <strain>cv. Wassilewskija</strain>
    </source>
</reference>
<reference key="5">
    <citation type="journal article" date="1999" name="Biosci. Biotechnol. Biochem.">
        <title>Biochemical characterization of a putative cytokinin-responsive His-kinase, CKI1, from Arabidopsis thaliana.</title>
        <authorList>
            <person name="Nakamura A."/>
            <person name="Kakimoto T."/>
            <person name="Imamura A."/>
            <person name="Suzuki T."/>
            <person name="Ueguchi C."/>
            <person name="Mizuno T."/>
        </authorList>
    </citation>
    <scope>FUNCTION</scope>
    <scope>MUTAGENESIS OF ASP-1050</scope>
</reference>
<reference key="6">
    <citation type="journal article" date="2000" name="FEBS Lett.">
        <title>Possible His to Asp phosphorelay signaling in an Arabidopsis two-component system.</title>
        <authorList>
            <person name="Urao T."/>
            <person name="Miyata S."/>
            <person name="Yamaguchi-Shinozaki K."/>
            <person name="Shinozaki K."/>
        </authorList>
    </citation>
    <scope>INTERACTION WITH AHP2 AND AHP3</scope>
</reference>
<reference key="7">
    <citation type="journal article" date="2002" name="Proc. Natl. Acad. Sci. U.S.A.">
        <title>An Arabidopsis histidine kinase is essential for megagametogenesis.</title>
        <authorList>
            <person name="Pischke M.S."/>
            <person name="Jones L.G."/>
            <person name="Otsuga D."/>
            <person name="Fernandez D.E."/>
            <person name="Drews G.N."/>
            <person name="Sussman M.R."/>
        </authorList>
    </citation>
    <scope>FUNCTION</scope>
    <scope>DISRUPTION PHENOTYPE</scope>
    <scope>DEVELOPMENTAL STAGE</scope>
    <scope>TISSUE SPECIFICITY</scope>
</reference>
<reference key="8">
    <citation type="journal article" date="2003" name="Mol. Genet. Genomics">
        <title>The putative sensor histidine kinase CKI1 is involved in female gametophyte development in Arabidopsis.</title>
        <authorList>
            <person name="Hejatko J."/>
            <person name="Pernisova M."/>
            <person name="Eneva T."/>
            <person name="Palme K."/>
            <person name="Brzobohaty B."/>
        </authorList>
    </citation>
    <scope>FUNCTION</scope>
    <scope>DISRUPTION PHENOTYPE</scope>
    <scope>MUTAGENESIS OF 150-ARG--TYR-153</scope>
    <scope>DEVELOPMENTAL STAGE</scope>
</reference>
<reference key="9">
    <citation type="journal article" date="2007" name="Proc. Natl. Acad. Sci. U.S.A.">
        <title>Functional analysis of AHK1/ATHK1 and cytokinin receptor histidine kinases in response to abscisic acid, drought, and salt stress in Arabidopsis.</title>
        <authorList>
            <person name="Tran L.S."/>
            <person name="Urao T."/>
            <person name="Qin F."/>
            <person name="Maruyama K."/>
            <person name="Kakimoto T."/>
            <person name="Shinozaki K."/>
            <person name="Yamaguchi-Shinozaki K."/>
        </authorList>
    </citation>
    <scope>FUNCTION</scope>
</reference>
<reference key="10">
    <citation type="journal article" date="2009" name="Plant Cell">
        <title>The histidine kinases CYTOKININ-INDEPENDENT1 and ARABIDOPSIS HISTIDINE KINASE2 and 3 regulate vascular tissue development in Arabidopsis shoots.</title>
        <authorList>
            <person name="Hejatko J."/>
            <person name="Ryu H."/>
            <person name="Kim G.-T."/>
            <person name="Dobesova R."/>
            <person name="Choi S."/>
            <person name="Choi S.M."/>
            <person name="Soucek P."/>
            <person name="Horak J."/>
            <person name="Pekarova B."/>
            <person name="Palme K."/>
            <person name="Brzobohaty B."/>
            <person name="Hwang I."/>
        </authorList>
    </citation>
    <scope>FUNCTION</scope>
    <scope>TISSUE SPECIFICITY</scope>
    <scope>SUBCELLULAR LOCATION</scope>
    <scope>HOMODIMERIZATION</scope>
    <scope>MUTAGENESIS OF HIS-405</scope>
</reference>
<reference key="11">
    <citation type="journal article" date="2010" name="Plant Cell">
        <title>Arabidopsis histidine kinase CKI1 acts upstream of histidine phosphotransfer proteins to regulate female gametophyte development and vegetative growth.</title>
        <authorList>
            <person name="Deng Y."/>
            <person name="Dong H."/>
            <person name="Mu J."/>
            <person name="Ren B."/>
            <person name="Zheng B."/>
            <person name="Ji Z."/>
            <person name="Yang W.-C."/>
            <person name="Liang Y."/>
            <person name="Zuo J."/>
        </authorList>
    </citation>
    <scope>FUNCTION</scope>
    <scope>DISRUPTION PHENOTYPE</scope>
    <scope>TISSUE SPECIFICITY</scope>
</reference>
<comment type="function">
    <text evidence="5 7 8 9 10 11 12">Essential protein. Functions as a histidine kinase and transmits the stress signal to a downstream MAPK cascade. This protein undergoes an ATP-dependent autophosphorylation at a conserved histidine residue in the kinase core, and a phosphoryl group is then transferred to a conserved aspartate residue in the receiver domain. Required for the development of megagametophyte in female gametophyte (embryo sac) independently of cytokinin. Contributes to vascular bundle formation and secondary growth in a cytokinin-independent manner, probably by promoting the maintenance of mitotic activity and/or identity of procambial cells. Seems to influence and promote the cytokinin signaling pathway.</text>
</comment>
<comment type="catalytic activity">
    <reaction>
        <text>ATP + protein L-histidine = ADP + protein N-phospho-L-histidine.</text>
        <dbReference type="EC" id="2.7.13.3"/>
    </reaction>
</comment>
<comment type="subunit">
    <text evidence="6">Homodimer. Interacts with AHP2 and AHP3.</text>
</comment>
<comment type="subcellular location">
    <subcellularLocation>
        <location evidence="10">Cell membrane</location>
        <topology evidence="10">Multi-pass membrane protein</topology>
    </subcellularLocation>
</comment>
<comment type="tissue specificity">
    <text evidence="7 10 11">Expressed in vascular tissues of inflorescence stems and floral organs, especially in procambium cells, and in siliques.</text>
</comment>
<comment type="developmental stage">
    <text evidence="7 8">Present at low levels in developing ovules. Within mature female gametophytes, high levels in the central cell nucleus and weak levels in the egg cell nucleus. In fertilized ovules, expressed in the endosperm nuclei during 2 days after pollination.</text>
</comment>
<comment type="disruption phenotype">
    <text evidence="7 8 11">Cannot be transmitted through the female germ line. Impaired megagametogenesis visible from the four-nucleate stage, with two normal nuclei and two degenerated nuclei, leading to female sterility. Normal response to cytokinins.</text>
</comment>
<protein>
    <recommendedName>
        <fullName>Histidine kinase CKI1</fullName>
        <ecNumber>2.7.13.3</ecNumber>
    </recommendedName>
    <alternativeName>
        <fullName>Protein CYTOKININ-INDEPENDENT 1</fullName>
    </alternativeName>
</protein>
<accession>O22267</accession>
<accession>A5YY37</accession>
<proteinExistence type="evidence at protein level"/>
<feature type="chain" id="PRO_0000398591" description="Histidine kinase CKI1">
    <location>
        <begin position="1"/>
        <end position="1122"/>
    </location>
</feature>
<feature type="topological domain" description="Cytoplasmic" evidence="1">
    <location>
        <begin position="1"/>
        <end position="12"/>
    </location>
</feature>
<feature type="transmembrane region" description="Helical" evidence="1">
    <location>
        <begin position="13"/>
        <end position="33"/>
    </location>
</feature>
<feature type="topological domain" description="Extracellular" evidence="1">
    <location>
        <begin position="34"/>
        <end position="345"/>
    </location>
</feature>
<feature type="transmembrane region" description="Helical" evidence="1">
    <location>
        <begin position="346"/>
        <end position="366"/>
    </location>
</feature>
<feature type="topological domain" description="Cytoplasmic" evidence="1">
    <location>
        <begin position="367"/>
        <end position="1122"/>
    </location>
</feature>
<feature type="domain" description="Histidine kinase" evidence="2">
    <location>
        <begin position="402"/>
        <end position="671"/>
    </location>
</feature>
<feature type="domain" description="Response regulatory" evidence="3">
    <location>
        <begin position="987"/>
        <end position="1120"/>
    </location>
</feature>
<feature type="region of interest" description="Disordered" evidence="4">
    <location>
        <begin position="918"/>
        <end position="981"/>
    </location>
</feature>
<feature type="compositionally biased region" description="Basic and acidic residues" evidence="4">
    <location>
        <begin position="918"/>
        <end position="928"/>
    </location>
</feature>
<feature type="modified residue" description="Phosphohistidine; by autocatalysis" evidence="2">
    <location>
        <position position="405"/>
    </location>
</feature>
<feature type="modified residue" description="4-aspartylphosphate" evidence="3">
    <location>
        <position position="1050"/>
    </location>
</feature>
<feature type="mutagenesis site" description="In cki1-r; normal phenotype rescued from En-1 insertional disruption phenotype." evidence="8">
    <original>RGDY</original>
    <variation>GT</variation>
    <location>
        <begin position="150"/>
        <end position="153"/>
    </location>
</feature>
<feature type="mutagenesis site" description="Dysfunction of the two-component signaling pathway leading to defects in procambial cell maintenance and proliferation, as well as the absence of secondary growth." evidence="10">
    <original>H</original>
    <variation>Q</variation>
    <location>
        <position position="405"/>
    </location>
</feature>
<feature type="mutagenesis site" description="Loss of histidine kinase activity." evidence="5">
    <original>D</original>
    <variation>Q</variation>
    <variation>E</variation>
    <location>
        <position position="1050"/>
    </location>
</feature>
<feature type="turn" evidence="13">
    <location>
        <begin position="980"/>
        <end position="985"/>
    </location>
</feature>
<feature type="strand" evidence="13">
    <location>
        <begin position="987"/>
        <end position="991"/>
    </location>
</feature>
<feature type="helix" evidence="13">
    <location>
        <begin position="995"/>
        <end position="1007"/>
    </location>
</feature>
<feature type="strand" evidence="13">
    <location>
        <begin position="1011"/>
        <end position="1018"/>
    </location>
</feature>
<feature type="helix" evidence="13">
    <location>
        <begin position="1019"/>
        <end position="1036"/>
    </location>
</feature>
<feature type="strand" evidence="13">
    <location>
        <begin position="1045"/>
        <end position="1051"/>
    </location>
</feature>
<feature type="strand" evidence="13">
    <location>
        <begin position="1054"/>
        <end position="1056"/>
    </location>
</feature>
<feature type="helix" evidence="13">
    <location>
        <begin position="1058"/>
        <end position="1070"/>
    </location>
</feature>
<feature type="turn" evidence="13">
    <location>
        <begin position="1071"/>
        <end position="1073"/>
    </location>
</feature>
<feature type="strand" evidence="13">
    <location>
        <begin position="1078"/>
        <end position="1084"/>
    </location>
</feature>
<feature type="helix" evidence="13">
    <location>
        <begin position="1088"/>
        <end position="1097"/>
    </location>
</feature>
<feature type="strand" evidence="13">
    <location>
        <begin position="1101"/>
        <end position="1104"/>
    </location>
</feature>
<feature type="helix" evidence="13">
    <location>
        <begin position="1110"/>
        <end position="1119"/>
    </location>
</feature>
<gene>
    <name type="primary">CKI1</name>
    <name type="ordered locus">At2g47430</name>
    <name type="ORF">T30B22.27</name>
</gene>
<dbReference type="EC" id="2.7.13.3"/>
<dbReference type="EMBL" id="D87545">
    <property type="protein sequence ID" value="BAA13416.1"/>
    <property type="molecule type" value="mRNA"/>
</dbReference>
<dbReference type="EMBL" id="AC002535">
    <property type="protein sequence ID" value="AAC62867.1"/>
    <property type="molecule type" value="Genomic_DNA"/>
</dbReference>
<dbReference type="EMBL" id="CP002685">
    <property type="protein sequence ID" value="AEC10840.1"/>
    <property type="molecule type" value="Genomic_DNA"/>
</dbReference>
<dbReference type="EMBL" id="EF598269">
    <property type="protein sequence ID" value="ABQ85241.1"/>
    <property type="molecule type" value="Genomic_DNA"/>
</dbReference>
<dbReference type="EMBL" id="EF598270">
    <property type="protein sequence ID" value="ABQ85242.1"/>
    <property type="molecule type" value="Genomic_DNA"/>
</dbReference>
<dbReference type="EMBL" id="EF598271">
    <property type="protein sequence ID" value="ABQ85243.1"/>
    <property type="molecule type" value="Genomic_DNA"/>
</dbReference>
<dbReference type="EMBL" id="EF598272">
    <property type="protein sequence ID" value="ABQ85244.1"/>
    <property type="molecule type" value="Genomic_DNA"/>
</dbReference>
<dbReference type="EMBL" id="EF598273">
    <property type="protein sequence ID" value="ABQ85245.1"/>
    <property type="molecule type" value="Genomic_DNA"/>
</dbReference>
<dbReference type="EMBL" id="EF598274">
    <property type="protein sequence ID" value="ABQ85246.1"/>
    <property type="molecule type" value="Genomic_DNA"/>
</dbReference>
<dbReference type="EMBL" id="EF598275">
    <property type="protein sequence ID" value="ABQ85247.1"/>
    <property type="molecule type" value="Genomic_DNA"/>
</dbReference>
<dbReference type="EMBL" id="EF598276">
    <property type="protein sequence ID" value="ABQ85248.1"/>
    <property type="molecule type" value="Genomic_DNA"/>
</dbReference>
<dbReference type="EMBL" id="EF598277">
    <property type="protein sequence ID" value="ABQ85249.1"/>
    <property type="molecule type" value="Genomic_DNA"/>
</dbReference>
<dbReference type="EMBL" id="EF598278">
    <property type="protein sequence ID" value="ABQ85250.1"/>
    <property type="molecule type" value="Genomic_DNA"/>
</dbReference>
<dbReference type="EMBL" id="EF598279">
    <property type="protein sequence ID" value="ABQ85251.1"/>
    <property type="molecule type" value="Genomic_DNA"/>
</dbReference>
<dbReference type="EMBL" id="EF598280">
    <property type="protein sequence ID" value="ABQ85252.1"/>
    <property type="molecule type" value="Genomic_DNA"/>
</dbReference>
<dbReference type="EMBL" id="EF598281">
    <property type="protein sequence ID" value="ABQ85253.1"/>
    <property type="molecule type" value="Genomic_DNA"/>
</dbReference>
<dbReference type="EMBL" id="EF598282">
    <property type="protein sequence ID" value="ABQ85254.1"/>
    <property type="molecule type" value="Genomic_DNA"/>
</dbReference>
<dbReference type="EMBL" id="EF598283">
    <property type="protein sequence ID" value="ABQ85255.1"/>
    <property type="molecule type" value="Genomic_DNA"/>
</dbReference>
<dbReference type="EMBL" id="EF598284">
    <property type="protein sequence ID" value="ABQ85256.1"/>
    <property type="molecule type" value="Genomic_DNA"/>
</dbReference>
<dbReference type="EMBL" id="EF598285">
    <property type="protein sequence ID" value="ABQ85257.1"/>
    <property type="molecule type" value="Genomic_DNA"/>
</dbReference>
<dbReference type="EMBL" id="EF598286">
    <property type="protein sequence ID" value="ABQ85258.1"/>
    <property type="molecule type" value="Genomic_DNA"/>
</dbReference>
<dbReference type="EMBL" id="EF598287">
    <property type="protein sequence ID" value="ABQ85259.1"/>
    <property type="molecule type" value="Genomic_DNA"/>
</dbReference>
<dbReference type="EMBL" id="EF598288">
    <property type="protein sequence ID" value="ABQ85260.1"/>
    <property type="molecule type" value="Genomic_DNA"/>
</dbReference>
<dbReference type="EMBL" id="EF598289">
    <property type="protein sequence ID" value="ABQ85261.1"/>
    <property type="molecule type" value="Genomic_DNA"/>
</dbReference>
<dbReference type="EMBL" id="EF598290">
    <property type="protein sequence ID" value="ABQ85262.1"/>
    <property type="molecule type" value="Genomic_DNA"/>
</dbReference>
<dbReference type="EMBL" id="EF598291">
    <property type="protein sequence ID" value="ABQ85263.1"/>
    <property type="molecule type" value="Genomic_DNA"/>
</dbReference>
<dbReference type="PIR" id="T00441">
    <property type="entry name" value="T00441"/>
</dbReference>
<dbReference type="RefSeq" id="NP_182265.1">
    <property type="nucleotide sequence ID" value="NM_130311.2"/>
</dbReference>
<dbReference type="PDB" id="3MM4">
    <property type="method" value="X-ray"/>
    <property type="resolution" value="2.00 A"/>
    <property type="chains" value="A=944-1122"/>
</dbReference>
<dbReference type="PDB" id="3MMN">
    <property type="method" value="X-ray"/>
    <property type="resolution" value="2.20 A"/>
    <property type="chains" value="A=944-1122"/>
</dbReference>
<dbReference type="PDB" id="5LNM">
    <property type="method" value="X-ray"/>
    <property type="resolution" value="1.95 A"/>
    <property type="chains" value="A=944-1122"/>
</dbReference>
<dbReference type="PDB" id="5LNN">
    <property type="method" value="X-ray"/>
    <property type="resolution" value="1.60 A"/>
    <property type="chains" value="A=944-1122"/>
</dbReference>
<dbReference type="PDB" id="5N2N">
    <property type="method" value="X-ray"/>
    <property type="resolution" value="2.05 A"/>
    <property type="chains" value="A=944-1122"/>
</dbReference>
<dbReference type="PDBsum" id="3MM4"/>
<dbReference type="PDBsum" id="3MMN"/>
<dbReference type="PDBsum" id="5LNM"/>
<dbReference type="PDBsum" id="5LNN"/>
<dbReference type="PDBsum" id="5N2N"/>
<dbReference type="SMR" id="O22267"/>
<dbReference type="BioGRID" id="4691">
    <property type="interactions" value="5"/>
</dbReference>
<dbReference type="FunCoup" id="O22267">
    <property type="interactions" value="6"/>
</dbReference>
<dbReference type="IntAct" id="O22267">
    <property type="interactions" value="3"/>
</dbReference>
<dbReference type="STRING" id="3702.O22267"/>
<dbReference type="PaxDb" id="3702-AT2G47430.1"/>
<dbReference type="ProteomicsDB" id="246811"/>
<dbReference type="EnsemblPlants" id="AT2G47430.1">
    <property type="protein sequence ID" value="AT2G47430.1"/>
    <property type="gene ID" value="AT2G47430"/>
</dbReference>
<dbReference type="GeneID" id="819356"/>
<dbReference type="Gramene" id="AT2G47430.1">
    <property type="protein sequence ID" value="AT2G47430.1"/>
    <property type="gene ID" value="AT2G47430"/>
</dbReference>
<dbReference type="KEGG" id="ath:AT2G47430"/>
<dbReference type="Araport" id="AT2G47430"/>
<dbReference type="TAIR" id="AT2G47430">
    <property type="gene designation" value="CKI1"/>
</dbReference>
<dbReference type="eggNOG" id="KOG0519">
    <property type="taxonomic scope" value="Eukaryota"/>
</dbReference>
<dbReference type="HOGENOM" id="CLU_000445_104_16_1"/>
<dbReference type="InParanoid" id="O22267"/>
<dbReference type="OMA" id="LRCTTTM"/>
<dbReference type="PhylomeDB" id="O22267"/>
<dbReference type="BRENDA" id="2.7.13.3">
    <property type="organism ID" value="399"/>
</dbReference>
<dbReference type="EvolutionaryTrace" id="O22267"/>
<dbReference type="PRO" id="PR:O22267"/>
<dbReference type="Proteomes" id="UP000006548">
    <property type="component" value="Chromosome 2"/>
</dbReference>
<dbReference type="ExpressionAtlas" id="O22267">
    <property type="expression patterns" value="baseline and differential"/>
</dbReference>
<dbReference type="GO" id="GO:0005886">
    <property type="term" value="C:plasma membrane"/>
    <property type="evidence" value="ECO:0000314"/>
    <property type="project" value="UniProtKB"/>
</dbReference>
<dbReference type="GO" id="GO:0009506">
    <property type="term" value="C:plasmodesma"/>
    <property type="evidence" value="ECO:0007005"/>
    <property type="project" value="TAIR"/>
</dbReference>
<dbReference type="GO" id="GO:0000155">
    <property type="term" value="F:phosphorelay sensor kinase activity"/>
    <property type="evidence" value="ECO:0007669"/>
    <property type="project" value="InterPro"/>
</dbReference>
<dbReference type="GO" id="GO:0004673">
    <property type="term" value="F:protein histidine kinase activity"/>
    <property type="evidence" value="ECO:0000314"/>
    <property type="project" value="UniProtKB"/>
</dbReference>
<dbReference type="GO" id="GO:0042803">
    <property type="term" value="F:protein homodimerization activity"/>
    <property type="evidence" value="ECO:0000314"/>
    <property type="project" value="UniProtKB"/>
</dbReference>
<dbReference type="GO" id="GO:0009736">
    <property type="term" value="P:cytokinin-activated signaling pathway"/>
    <property type="evidence" value="ECO:0000304"/>
    <property type="project" value="TAIR"/>
</dbReference>
<dbReference type="GO" id="GO:0009553">
    <property type="term" value="P:embryo sac development"/>
    <property type="evidence" value="ECO:0000315"/>
    <property type="project" value="TAIR"/>
</dbReference>
<dbReference type="GO" id="GO:0010087">
    <property type="term" value="P:phloem or xylem histogenesis"/>
    <property type="evidence" value="ECO:0000315"/>
    <property type="project" value="UniProtKB"/>
</dbReference>
<dbReference type="GO" id="GO:0080117">
    <property type="term" value="P:secondary growth"/>
    <property type="evidence" value="ECO:0000315"/>
    <property type="project" value="UniProtKB"/>
</dbReference>
<dbReference type="CDD" id="cd00082">
    <property type="entry name" value="HisKA"/>
    <property type="match status" value="1"/>
</dbReference>
<dbReference type="CDD" id="cd17546">
    <property type="entry name" value="REC_hyHK_CKI1_RcsC-like"/>
    <property type="match status" value="1"/>
</dbReference>
<dbReference type="Gene3D" id="1.10.287.130">
    <property type="match status" value="1"/>
</dbReference>
<dbReference type="Gene3D" id="3.40.50.2300">
    <property type="match status" value="1"/>
</dbReference>
<dbReference type="Gene3D" id="3.30.565.10">
    <property type="entry name" value="Histidine kinase-like ATPase, C-terminal domain"/>
    <property type="match status" value="1"/>
</dbReference>
<dbReference type="InterPro" id="IPR050956">
    <property type="entry name" value="2C_system_His_kinase"/>
</dbReference>
<dbReference type="InterPro" id="IPR011006">
    <property type="entry name" value="CheY-like_superfamily"/>
</dbReference>
<dbReference type="InterPro" id="IPR036890">
    <property type="entry name" value="HATPase_C_sf"/>
</dbReference>
<dbReference type="InterPro" id="IPR005467">
    <property type="entry name" value="His_kinase_dom"/>
</dbReference>
<dbReference type="InterPro" id="IPR003661">
    <property type="entry name" value="HisK_dim/P_dom"/>
</dbReference>
<dbReference type="InterPro" id="IPR036097">
    <property type="entry name" value="HisK_dim/P_sf"/>
</dbReference>
<dbReference type="InterPro" id="IPR004358">
    <property type="entry name" value="Sig_transdc_His_kin-like_C"/>
</dbReference>
<dbReference type="InterPro" id="IPR001789">
    <property type="entry name" value="Sig_transdc_resp-reg_receiver"/>
</dbReference>
<dbReference type="PANTHER" id="PTHR43719:SF75">
    <property type="entry name" value="HISTIDINE KINASE CKI1"/>
    <property type="match status" value="1"/>
</dbReference>
<dbReference type="PANTHER" id="PTHR43719">
    <property type="entry name" value="TWO-COMPONENT HISTIDINE KINASE"/>
    <property type="match status" value="1"/>
</dbReference>
<dbReference type="Pfam" id="PF02518">
    <property type="entry name" value="HATPase_c"/>
    <property type="match status" value="1"/>
</dbReference>
<dbReference type="Pfam" id="PF00512">
    <property type="entry name" value="HisKA"/>
    <property type="match status" value="1"/>
</dbReference>
<dbReference type="Pfam" id="PF00072">
    <property type="entry name" value="Response_reg"/>
    <property type="match status" value="1"/>
</dbReference>
<dbReference type="PRINTS" id="PR00344">
    <property type="entry name" value="BCTRLSENSOR"/>
</dbReference>
<dbReference type="SMART" id="SM00387">
    <property type="entry name" value="HATPase_c"/>
    <property type="match status" value="1"/>
</dbReference>
<dbReference type="SMART" id="SM00388">
    <property type="entry name" value="HisKA"/>
    <property type="match status" value="1"/>
</dbReference>
<dbReference type="SMART" id="SM00448">
    <property type="entry name" value="REC"/>
    <property type="match status" value="1"/>
</dbReference>
<dbReference type="SUPFAM" id="SSF55874">
    <property type="entry name" value="ATPase domain of HSP90 chaperone/DNA topoisomerase II/histidine kinase"/>
    <property type="match status" value="1"/>
</dbReference>
<dbReference type="SUPFAM" id="SSF52172">
    <property type="entry name" value="CheY-like"/>
    <property type="match status" value="1"/>
</dbReference>
<dbReference type="SUPFAM" id="SSF47384">
    <property type="entry name" value="Homodimeric domain of signal transducing histidine kinase"/>
    <property type="match status" value="1"/>
</dbReference>
<dbReference type="PROSITE" id="PS50109">
    <property type="entry name" value="HIS_KIN"/>
    <property type="match status" value="1"/>
</dbReference>
<dbReference type="PROSITE" id="PS50110">
    <property type="entry name" value="RESPONSE_REGULATORY"/>
    <property type="match status" value="1"/>
</dbReference>
<keyword id="KW-0002">3D-structure</keyword>
<keyword id="KW-1003">Cell membrane</keyword>
<keyword id="KW-0217">Developmental protein</keyword>
<keyword id="KW-0418">Kinase</keyword>
<keyword id="KW-0472">Membrane</keyword>
<keyword id="KW-0597">Phosphoprotein</keyword>
<keyword id="KW-1185">Reference proteome</keyword>
<keyword id="KW-0808">Transferase</keyword>
<keyword id="KW-0812">Transmembrane</keyword>
<keyword id="KW-1133">Transmembrane helix</keyword>
<organism>
    <name type="scientific">Arabidopsis thaliana</name>
    <name type="common">Mouse-ear cress</name>
    <dbReference type="NCBI Taxonomy" id="3702"/>
    <lineage>
        <taxon>Eukaryota</taxon>
        <taxon>Viridiplantae</taxon>
        <taxon>Streptophyta</taxon>
        <taxon>Embryophyta</taxon>
        <taxon>Tracheophyta</taxon>
        <taxon>Spermatophyta</taxon>
        <taxon>Magnoliopsida</taxon>
        <taxon>eudicotyledons</taxon>
        <taxon>Gunneridae</taxon>
        <taxon>Pentapetalae</taxon>
        <taxon>rosids</taxon>
        <taxon>malvids</taxon>
        <taxon>Brassicales</taxon>
        <taxon>Brassicaceae</taxon>
        <taxon>Camelineae</taxon>
        <taxon>Arabidopsis</taxon>
    </lineage>
</organism>
<name>CKI1_ARATH</name>